<reference key="1">
    <citation type="journal article" date="2007" name="Genome Biol.">
        <title>Characterization and modeling of the Haemophilus influenzae core and supragenomes based on the complete genomic sequences of Rd and 12 clinical nontypeable strains.</title>
        <authorList>
            <person name="Hogg J.S."/>
            <person name="Hu F.Z."/>
            <person name="Janto B."/>
            <person name="Boissy R."/>
            <person name="Hayes J."/>
            <person name="Keefe R."/>
            <person name="Post J.C."/>
            <person name="Ehrlich G.D."/>
        </authorList>
    </citation>
    <scope>NUCLEOTIDE SEQUENCE [LARGE SCALE GENOMIC DNA]</scope>
    <source>
        <strain>PittEE</strain>
    </source>
</reference>
<evidence type="ECO:0000255" key="1">
    <source>
        <dbReference type="HAMAP-Rule" id="MF_00736"/>
    </source>
</evidence>
<evidence type="ECO:0000305" key="2"/>
<name>RL11_HAEIE</name>
<sequence length="142" mass="14904">MAKKVQAYVKLQVAAGMANPSPPVGPALGQQGVNIMEFCKAFNARTESLEKGLPIPVVITVYADRSFTFVTKTPPAAVLLKKAAGIKSGSGKPNKDKVGKVTLDQVRQIAETKAADMTGATIETKMKSIAGTARSMGLVVEE</sequence>
<accession>A5U9X6</accession>
<gene>
    <name evidence="1" type="primary">rplK</name>
    <name type="ordered locus">CGSHiEE_00415</name>
</gene>
<keyword id="KW-0488">Methylation</keyword>
<keyword id="KW-0687">Ribonucleoprotein</keyword>
<keyword id="KW-0689">Ribosomal protein</keyword>
<keyword id="KW-0694">RNA-binding</keyword>
<keyword id="KW-0699">rRNA-binding</keyword>
<protein>
    <recommendedName>
        <fullName evidence="1">Large ribosomal subunit protein uL11</fullName>
    </recommendedName>
    <alternativeName>
        <fullName evidence="2">50S ribosomal protein L11</fullName>
    </alternativeName>
</protein>
<proteinExistence type="inferred from homology"/>
<dbReference type="EMBL" id="CP000671">
    <property type="protein sequence ID" value="ABQ97577.1"/>
    <property type="molecule type" value="Genomic_DNA"/>
</dbReference>
<dbReference type="SMR" id="A5U9X6"/>
<dbReference type="KEGG" id="hip:CGSHiEE_00415"/>
<dbReference type="HOGENOM" id="CLU_074237_2_0_6"/>
<dbReference type="GO" id="GO:0022625">
    <property type="term" value="C:cytosolic large ribosomal subunit"/>
    <property type="evidence" value="ECO:0007669"/>
    <property type="project" value="TreeGrafter"/>
</dbReference>
<dbReference type="GO" id="GO:0070180">
    <property type="term" value="F:large ribosomal subunit rRNA binding"/>
    <property type="evidence" value="ECO:0007669"/>
    <property type="project" value="UniProtKB-UniRule"/>
</dbReference>
<dbReference type="GO" id="GO:0003735">
    <property type="term" value="F:structural constituent of ribosome"/>
    <property type="evidence" value="ECO:0007669"/>
    <property type="project" value="InterPro"/>
</dbReference>
<dbReference type="GO" id="GO:0006412">
    <property type="term" value="P:translation"/>
    <property type="evidence" value="ECO:0007669"/>
    <property type="project" value="UniProtKB-UniRule"/>
</dbReference>
<dbReference type="CDD" id="cd00349">
    <property type="entry name" value="Ribosomal_L11"/>
    <property type="match status" value="1"/>
</dbReference>
<dbReference type="FunFam" id="1.10.10.250:FF:000001">
    <property type="entry name" value="50S ribosomal protein L11"/>
    <property type="match status" value="1"/>
</dbReference>
<dbReference type="FunFam" id="3.30.1550.10:FF:000001">
    <property type="entry name" value="50S ribosomal protein L11"/>
    <property type="match status" value="1"/>
</dbReference>
<dbReference type="Gene3D" id="1.10.10.250">
    <property type="entry name" value="Ribosomal protein L11, C-terminal domain"/>
    <property type="match status" value="1"/>
</dbReference>
<dbReference type="Gene3D" id="3.30.1550.10">
    <property type="entry name" value="Ribosomal protein L11/L12, N-terminal domain"/>
    <property type="match status" value="1"/>
</dbReference>
<dbReference type="HAMAP" id="MF_00736">
    <property type="entry name" value="Ribosomal_uL11"/>
    <property type="match status" value="1"/>
</dbReference>
<dbReference type="InterPro" id="IPR000911">
    <property type="entry name" value="Ribosomal_uL11"/>
</dbReference>
<dbReference type="InterPro" id="IPR006519">
    <property type="entry name" value="Ribosomal_uL11_bac-typ"/>
</dbReference>
<dbReference type="InterPro" id="IPR020783">
    <property type="entry name" value="Ribosomal_uL11_C"/>
</dbReference>
<dbReference type="InterPro" id="IPR036769">
    <property type="entry name" value="Ribosomal_uL11_C_sf"/>
</dbReference>
<dbReference type="InterPro" id="IPR020784">
    <property type="entry name" value="Ribosomal_uL11_N"/>
</dbReference>
<dbReference type="InterPro" id="IPR036796">
    <property type="entry name" value="Ribosomal_uL11_N_sf"/>
</dbReference>
<dbReference type="NCBIfam" id="TIGR01632">
    <property type="entry name" value="L11_bact"/>
    <property type="match status" value="1"/>
</dbReference>
<dbReference type="PANTHER" id="PTHR11661">
    <property type="entry name" value="60S RIBOSOMAL PROTEIN L12"/>
    <property type="match status" value="1"/>
</dbReference>
<dbReference type="PANTHER" id="PTHR11661:SF1">
    <property type="entry name" value="LARGE RIBOSOMAL SUBUNIT PROTEIN UL11M"/>
    <property type="match status" value="1"/>
</dbReference>
<dbReference type="Pfam" id="PF00298">
    <property type="entry name" value="Ribosomal_L11"/>
    <property type="match status" value="1"/>
</dbReference>
<dbReference type="Pfam" id="PF03946">
    <property type="entry name" value="Ribosomal_L11_N"/>
    <property type="match status" value="1"/>
</dbReference>
<dbReference type="SMART" id="SM00649">
    <property type="entry name" value="RL11"/>
    <property type="match status" value="1"/>
</dbReference>
<dbReference type="SUPFAM" id="SSF54747">
    <property type="entry name" value="Ribosomal L11/L12e N-terminal domain"/>
    <property type="match status" value="1"/>
</dbReference>
<dbReference type="SUPFAM" id="SSF46906">
    <property type="entry name" value="Ribosomal protein L11, C-terminal domain"/>
    <property type="match status" value="1"/>
</dbReference>
<dbReference type="PROSITE" id="PS00359">
    <property type="entry name" value="RIBOSOMAL_L11"/>
    <property type="match status" value="1"/>
</dbReference>
<comment type="function">
    <text evidence="1">Forms part of the ribosomal stalk which helps the ribosome interact with GTP-bound translation factors.</text>
</comment>
<comment type="subunit">
    <text evidence="1">Part of the ribosomal stalk of the 50S ribosomal subunit. Interacts with L10 and the large rRNA to form the base of the stalk. L10 forms an elongated spine to which L12 dimers bind in a sequential fashion forming a multimeric L10(L12)X complex.</text>
</comment>
<comment type="PTM">
    <text evidence="1">One or more lysine residues are methylated.</text>
</comment>
<comment type="similarity">
    <text evidence="1">Belongs to the universal ribosomal protein uL11 family.</text>
</comment>
<organism>
    <name type="scientific">Haemophilus influenzae (strain PittEE)</name>
    <dbReference type="NCBI Taxonomy" id="374930"/>
    <lineage>
        <taxon>Bacteria</taxon>
        <taxon>Pseudomonadati</taxon>
        <taxon>Pseudomonadota</taxon>
        <taxon>Gammaproteobacteria</taxon>
        <taxon>Pasteurellales</taxon>
        <taxon>Pasteurellaceae</taxon>
        <taxon>Haemophilus</taxon>
    </lineage>
</organism>
<feature type="chain" id="PRO_1000046186" description="Large ribosomal subunit protein uL11">
    <location>
        <begin position="1"/>
        <end position="142"/>
    </location>
</feature>